<evidence type="ECO:0000250" key="1"/>
<evidence type="ECO:0000303" key="2">
    <source>
    </source>
</evidence>
<evidence type="ECO:0000305" key="3"/>
<keyword id="KW-1185">Reference proteome</keyword>
<keyword id="KW-0687">Ribonucleoprotein</keyword>
<keyword id="KW-0689">Ribosomal protein</keyword>
<comment type="subunit">
    <text evidence="1">Component of the small ribosomal subunit. Mature ribosomes consist of a small (40S) and a large (60S) subunit. The 40S subunit contains about 33 different proteins and 1 molecule of RNA (18S). The 60S subunit contains about 49 different proteins and 3 molecules of RNA (25S, 5.8S and 5S) (By similarity).</text>
</comment>
<comment type="similarity">
    <text evidence="3">Belongs to the universal ribosomal protein uL16 family.</text>
</comment>
<organism>
    <name type="scientific">Arabidopsis thaliana</name>
    <name type="common">Mouse-ear cress</name>
    <dbReference type="NCBI Taxonomy" id="3702"/>
    <lineage>
        <taxon>Eukaryota</taxon>
        <taxon>Viridiplantae</taxon>
        <taxon>Streptophyta</taxon>
        <taxon>Embryophyta</taxon>
        <taxon>Tracheophyta</taxon>
        <taxon>Spermatophyta</taxon>
        <taxon>Magnoliopsida</taxon>
        <taxon>eudicotyledons</taxon>
        <taxon>Gunneridae</taxon>
        <taxon>Pentapetalae</taxon>
        <taxon>rosids</taxon>
        <taxon>malvids</taxon>
        <taxon>Brassicales</taxon>
        <taxon>Brassicaceae</taxon>
        <taxon>Camelineae</taxon>
        <taxon>Arabidopsis</taxon>
    </lineage>
</organism>
<protein>
    <recommendedName>
        <fullName evidence="2">Large ribosomal subunit protein uL16y</fullName>
    </recommendedName>
    <alternativeName>
        <fullName>60S ribosomal protein L10-2</fullName>
    </alternativeName>
    <alternativeName>
        <fullName>Wilms tumor suppressor protein homolog</fullName>
    </alternativeName>
</protein>
<dbReference type="EMBL" id="Z15157">
    <property type="protein sequence ID" value="CAA78856.1"/>
    <property type="molecule type" value="mRNA"/>
</dbReference>
<dbReference type="EMBL" id="AC005508">
    <property type="protein sequence ID" value="AAD14497.1"/>
    <property type="molecule type" value="Genomic_DNA"/>
</dbReference>
<dbReference type="EMBL" id="CP002684">
    <property type="protein sequence ID" value="AEE30757.1"/>
    <property type="molecule type" value="Genomic_DNA"/>
</dbReference>
<dbReference type="EMBL" id="AY087264">
    <property type="protein sequence ID" value="AAM64819.1"/>
    <property type="molecule type" value="mRNA"/>
</dbReference>
<dbReference type="EMBL" id="Z46696">
    <property type="protein sequence ID" value="CAA86673.1"/>
    <property type="molecule type" value="mRNA"/>
</dbReference>
<dbReference type="PIR" id="A86396">
    <property type="entry name" value="A86396"/>
</dbReference>
<dbReference type="PIR" id="JQ2244">
    <property type="entry name" value="JQ2244"/>
</dbReference>
<dbReference type="RefSeq" id="NP_174013.1">
    <property type="nucleotide sequence ID" value="NM_102455.3"/>
</dbReference>
<dbReference type="SMR" id="Q08770"/>
<dbReference type="BioGRID" id="22278">
    <property type="interactions" value="134"/>
</dbReference>
<dbReference type="FunCoup" id="Q08770">
    <property type="interactions" value="2909"/>
</dbReference>
<dbReference type="STRING" id="3702.Q08770"/>
<dbReference type="iPTMnet" id="Q08770"/>
<dbReference type="PaxDb" id="3702-AT1G26910.1"/>
<dbReference type="ProteomicsDB" id="234816"/>
<dbReference type="EnsemblPlants" id="AT1G26910.1">
    <property type="protein sequence ID" value="AT1G26910.1"/>
    <property type="gene ID" value="AT1G26910"/>
</dbReference>
<dbReference type="GeneID" id="837036"/>
<dbReference type="Gramene" id="AT1G26910.1">
    <property type="protein sequence ID" value="AT1G26910.1"/>
    <property type="gene ID" value="AT1G26910"/>
</dbReference>
<dbReference type="KEGG" id="ath:AT1G26910"/>
<dbReference type="Araport" id="AT1G26910"/>
<dbReference type="TAIR" id="AT1G26910">
    <property type="gene designation" value="RPL10B"/>
</dbReference>
<dbReference type="eggNOG" id="KOG0857">
    <property type="taxonomic scope" value="Eukaryota"/>
</dbReference>
<dbReference type="HOGENOM" id="CLU_084051_0_0_1"/>
<dbReference type="InParanoid" id="Q08770"/>
<dbReference type="OMA" id="RRPACCY"/>
<dbReference type="OrthoDB" id="1024354at2759"/>
<dbReference type="PhylomeDB" id="Q08770"/>
<dbReference type="PRO" id="PR:Q08770"/>
<dbReference type="Proteomes" id="UP000006548">
    <property type="component" value="Chromosome 1"/>
</dbReference>
<dbReference type="ExpressionAtlas" id="Q08770">
    <property type="expression patterns" value="baseline and differential"/>
</dbReference>
<dbReference type="GO" id="GO:0009941">
    <property type="term" value="C:chloroplast envelope"/>
    <property type="evidence" value="ECO:0007005"/>
    <property type="project" value="TAIR"/>
</dbReference>
<dbReference type="GO" id="GO:0005737">
    <property type="term" value="C:cytoplasm"/>
    <property type="evidence" value="ECO:0000314"/>
    <property type="project" value="TAIR"/>
</dbReference>
<dbReference type="GO" id="GO:0005634">
    <property type="term" value="C:nucleus"/>
    <property type="evidence" value="ECO:0000314"/>
    <property type="project" value="TAIR"/>
</dbReference>
<dbReference type="GO" id="GO:1990904">
    <property type="term" value="C:ribonucleoprotein complex"/>
    <property type="evidence" value="ECO:0007669"/>
    <property type="project" value="UniProtKB-KW"/>
</dbReference>
<dbReference type="GO" id="GO:0005840">
    <property type="term" value="C:ribosome"/>
    <property type="evidence" value="ECO:0000353"/>
    <property type="project" value="TAIR"/>
</dbReference>
<dbReference type="GO" id="GO:0003735">
    <property type="term" value="F:structural constituent of ribosome"/>
    <property type="evidence" value="ECO:0007669"/>
    <property type="project" value="InterPro"/>
</dbReference>
<dbReference type="GO" id="GO:0032502">
    <property type="term" value="P:developmental process"/>
    <property type="evidence" value="ECO:0000315"/>
    <property type="project" value="TAIR"/>
</dbReference>
<dbReference type="GO" id="GO:0010224">
    <property type="term" value="P:response to UV-B"/>
    <property type="evidence" value="ECO:0000270"/>
    <property type="project" value="TAIR"/>
</dbReference>
<dbReference type="GO" id="GO:0006412">
    <property type="term" value="P:translation"/>
    <property type="evidence" value="ECO:0007669"/>
    <property type="project" value="InterPro"/>
</dbReference>
<dbReference type="CDD" id="cd01433">
    <property type="entry name" value="Ribosomal_L16_L10e"/>
    <property type="match status" value="1"/>
</dbReference>
<dbReference type="FunFam" id="3.90.1170.10:FF:000002">
    <property type="entry name" value="60S ribosomal protein L10"/>
    <property type="match status" value="1"/>
</dbReference>
<dbReference type="Gene3D" id="3.90.1170.10">
    <property type="entry name" value="Ribosomal protein L10e/L16"/>
    <property type="match status" value="1"/>
</dbReference>
<dbReference type="InterPro" id="IPR047873">
    <property type="entry name" value="Ribosomal_uL16"/>
</dbReference>
<dbReference type="InterPro" id="IPR018255">
    <property type="entry name" value="Ribosomal_uL16_CS_euk_arc"/>
</dbReference>
<dbReference type="InterPro" id="IPR016180">
    <property type="entry name" value="Ribosomal_uL16_dom"/>
</dbReference>
<dbReference type="InterPro" id="IPR001197">
    <property type="entry name" value="Ribosomal_uL16_euk_arch"/>
</dbReference>
<dbReference type="InterPro" id="IPR036920">
    <property type="entry name" value="Ribosomal_uL16_sf"/>
</dbReference>
<dbReference type="NCBIfam" id="NF003239">
    <property type="entry name" value="PRK04199.1-4"/>
    <property type="match status" value="1"/>
</dbReference>
<dbReference type="NCBIfam" id="TIGR00279">
    <property type="entry name" value="uL16_euk_arch"/>
    <property type="match status" value="1"/>
</dbReference>
<dbReference type="PANTHER" id="PTHR11726">
    <property type="entry name" value="60S RIBOSOMAL PROTEIN L10"/>
    <property type="match status" value="1"/>
</dbReference>
<dbReference type="Pfam" id="PF00252">
    <property type="entry name" value="Ribosomal_L16"/>
    <property type="match status" value="1"/>
</dbReference>
<dbReference type="PIRSF" id="PIRSF005590">
    <property type="entry name" value="Ribosomal_L10"/>
    <property type="match status" value="1"/>
</dbReference>
<dbReference type="SUPFAM" id="SSF54686">
    <property type="entry name" value="Ribosomal protein L16p/L10e"/>
    <property type="match status" value="1"/>
</dbReference>
<dbReference type="PROSITE" id="PS01257">
    <property type="entry name" value="RIBOSOMAL_L10E"/>
    <property type="match status" value="1"/>
</dbReference>
<proteinExistence type="evidence at transcript level"/>
<sequence length="221" mass="24909">MGRRPARCYRQIKGKPYPKSRYCRGVPDPKIRIYDVGMKRKGVDEFPYCVHLVSWEKENVSSEALEAARIACNKYMVKSAGKDAFHLRIRVHPFHVLRINKMLSCAGADRLQTGMRGAFGKALGTCARVAIGQVLLSVRCKDAHGHHAQEALRRAKFKFPGRQKIIVSRKWGFTKFNRADYTKLRQEKRIVPDGVNAKFLSCHGPLANRQPGSAFLSAGAQ</sequence>
<feature type="chain" id="PRO_0000147115" description="Large ribosomal subunit protein uL16y">
    <location>
        <begin position="1"/>
        <end position="221"/>
    </location>
</feature>
<feature type="sequence conflict" description="In Ref. 1 and 5." evidence="3" ref="1 5">
    <original>Y</original>
    <variation>F</variation>
    <location>
        <position position="48"/>
    </location>
</feature>
<feature type="sequence conflict" description="In Ref. 1; CAA78856." evidence="3" ref="1">
    <original>F</original>
    <variation>S</variation>
    <location>
        <position position="94"/>
    </location>
</feature>
<feature type="sequence conflict" description="In Ref. 1; CAA78856." evidence="3" ref="1">
    <original>Y</original>
    <variation>F</variation>
    <location>
        <position position="181"/>
    </location>
</feature>
<feature type="sequence conflict" description="In Ref. 1; CAA78856." evidence="3" ref="1">
    <original>I</original>
    <variation>V</variation>
    <location>
        <position position="190"/>
    </location>
</feature>
<feature type="sequence conflict" description="In Ref. 1; CAA78856." evidence="3" ref="1">
    <original>SAGAQ</original>
    <variation>PAHY</variation>
    <location>
        <begin position="217"/>
        <end position="221"/>
    </location>
</feature>
<gene>
    <name type="primary">RPL10B</name>
    <name type="ordered locus">At1g26910</name>
    <name type="ORF">T2P11.10</name>
</gene>
<name>RL102_ARATH</name>
<accession>Q08770</accession>
<accession>Q42327</accession>
<accession>Q9ZVG7</accession>
<reference key="1">
    <citation type="journal article" date="1993" name="Plant Physiol.">
        <title>Nucleotide sequence of an Arabidopsis thaliana cDNA clone encoding a homolog to a suppressor of Wilms' tumor.</title>
        <authorList>
            <person name="Rivera-Madrid R."/>
            <person name="Marinho P."/>
            <person name="Chartier Y."/>
            <person name="Meyer Y."/>
        </authorList>
    </citation>
    <scope>NUCLEOTIDE SEQUENCE [MRNA]</scope>
</reference>
<reference key="2">
    <citation type="journal article" date="2000" name="Nature">
        <title>Sequence and analysis of chromosome 1 of the plant Arabidopsis thaliana.</title>
        <authorList>
            <person name="Theologis A."/>
            <person name="Ecker J.R."/>
            <person name="Palm C.J."/>
            <person name="Federspiel N.A."/>
            <person name="Kaul S."/>
            <person name="White O."/>
            <person name="Alonso J."/>
            <person name="Altafi H."/>
            <person name="Araujo R."/>
            <person name="Bowman C.L."/>
            <person name="Brooks S.Y."/>
            <person name="Buehler E."/>
            <person name="Chan A."/>
            <person name="Chao Q."/>
            <person name="Chen H."/>
            <person name="Cheuk R.F."/>
            <person name="Chin C.W."/>
            <person name="Chung M.K."/>
            <person name="Conn L."/>
            <person name="Conway A.B."/>
            <person name="Conway A.R."/>
            <person name="Creasy T.H."/>
            <person name="Dewar K."/>
            <person name="Dunn P."/>
            <person name="Etgu P."/>
            <person name="Feldblyum T.V."/>
            <person name="Feng J.-D."/>
            <person name="Fong B."/>
            <person name="Fujii C.Y."/>
            <person name="Gill J.E."/>
            <person name="Goldsmith A.D."/>
            <person name="Haas B."/>
            <person name="Hansen N.F."/>
            <person name="Hughes B."/>
            <person name="Huizar L."/>
            <person name="Hunter J.L."/>
            <person name="Jenkins J."/>
            <person name="Johnson-Hopson C."/>
            <person name="Khan S."/>
            <person name="Khaykin E."/>
            <person name="Kim C.J."/>
            <person name="Koo H.L."/>
            <person name="Kremenetskaia I."/>
            <person name="Kurtz D.B."/>
            <person name="Kwan A."/>
            <person name="Lam B."/>
            <person name="Langin-Hooper S."/>
            <person name="Lee A."/>
            <person name="Lee J.M."/>
            <person name="Lenz C.A."/>
            <person name="Li J.H."/>
            <person name="Li Y.-P."/>
            <person name="Lin X."/>
            <person name="Liu S.X."/>
            <person name="Liu Z.A."/>
            <person name="Luros J.S."/>
            <person name="Maiti R."/>
            <person name="Marziali A."/>
            <person name="Militscher J."/>
            <person name="Miranda M."/>
            <person name="Nguyen M."/>
            <person name="Nierman W.C."/>
            <person name="Osborne B.I."/>
            <person name="Pai G."/>
            <person name="Peterson J."/>
            <person name="Pham P.K."/>
            <person name="Rizzo M."/>
            <person name="Rooney T."/>
            <person name="Rowley D."/>
            <person name="Sakano H."/>
            <person name="Salzberg S.L."/>
            <person name="Schwartz J.R."/>
            <person name="Shinn P."/>
            <person name="Southwick A.M."/>
            <person name="Sun H."/>
            <person name="Tallon L.J."/>
            <person name="Tambunga G."/>
            <person name="Toriumi M.J."/>
            <person name="Town C.D."/>
            <person name="Utterback T."/>
            <person name="Van Aken S."/>
            <person name="Vaysberg M."/>
            <person name="Vysotskaia V.S."/>
            <person name="Walker M."/>
            <person name="Wu D."/>
            <person name="Yu G."/>
            <person name="Fraser C.M."/>
            <person name="Venter J.C."/>
            <person name="Davis R.W."/>
        </authorList>
    </citation>
    <scope>NUCLEOTIDE SEQUENCE [LARGE SCALE GENOMIC DNA]</scope>
    <source>
        <strain>cv. Columbia</strain>
    </source>
</reference>
<reference key="3">
    <citation type="journal article" date="2017" name="Plant J.">
        <title>Araport11: a complete reannotation of the Arabidopsis thaliana reference genome.</title>
        <authorList>
            <person name="Cheng C.Y."/>
            <person name="Krishnakumar V."/>
            <person name="Chan A.P."/>
            <person name="Thibaud-Nissen F."/>
            <person name="Schobel S."/>
            <person name="Town C.D."/>
        </authorList>
    </citation>
    <scope>GENOME REANNOTATION</scope>
    <source>
        <strain>cv. Columbia</strain>
    </source>
</reference>
<reference key="4">
    <citation type="submission" date="2002-03" db="EMBL/GenBank/DDBJ databases">
        <title>Full-length cDNA from Arabidopsis thaliana.</title>
        <authorList>
            <person name="Brover V.V."/>
            <person name="Troukhan M.E."/>
            <person name="Alexandrov N.A."/>
            <person name="Lu Y.-P."/>
            <person name="Flavell R.B."/>
            <person name="Feldmann K.A."/>
        </authorList>
    </citation>
    <scope>NUCLEOTIDE SEQUENCE [LARGE SCALE MRNA]</scope>
</reference>
<reference key="5">
    <citation type="journal article" date="1996" name="Plant J.">
        <title>Further progress towards a catalogue of all Arabidopsis genes: analysis of a set of 5000 non-redundant ESTs.</title>
        <authorList>
            <person name="Cooke R."/>
            <person name="Raynal M."/>
            <person name="Laudie M."/>
            <person name="Grellet F."/>
            <person name="Delseny M."/>
            <person name="Morris P.-C."/>
            <person name="Guerrier D."/>
            <person name="Giraudat J."/>
            <person name="Quigley F."/>
            <person name="Clabault G."/>
            <person name="Li Y.-F."/>
            <person name="Mache R."/>
            <person name="Krivitzky M."/>
            <person name="Gy I.J.-J."/>
            <person name="Kreis M."/>
            <person name="Lecharny A."/>
            <person name="Parmentier Y."/>
            <person name="Marbach J."/>
            <person name="Fleck J."/>
            <person name="Clement B."/>
            <person name="Philipps G."/>
            <person name="Herve C."/>
            <person name="Bardet C."/>
            <person name="Tremousaygue D."/>
            <person name="Lescure B."/>
            <person name="Lacomme C."/>
            <person name="Roby D."/>
            <person name="Jourjon M.-F."/>
            <person name="Chabrier P."/>
            <person name="Charpenteau J.-L."/>
            <person name="Desprez T."/>
            <person name="Amselem J."/>
            <person name="Chiapello H."/>
            <person name="Hoefte H."/>
        </authorList>
    </citation>
    <scope>NUCLEOTIDE SEQUENCE [LARGE SCALE MRNA] OF 18-133</scope>
    <source>
        <strain>cv. Columbia</strain>
        <tissue>Dry seed</tissue>
    </source>
</reference>
<reference key="6">
    <citation type="journal article" date="2001" name="Plant Physiol.">
        <title>The organization of cytoplasmic ribosomal protein genes in the Arabidopsis genome.</title>
        <authorList>
            <person name="Barakat A."/>
            <person name="Szick-Miranda K."/>
            <person name="Chang I.-F."/>
            <person name="Guyot R."/>
            <person name="Blanc G."/>
            <person name="Cooke R."/>
            <person name="Delseny M."/>
            <person name="Bailey-Serres J."/>
        </authorList>
    </citation>
    <scope>GENE FAMILY ORGANIZATION</scope>
    <scope>NOMENCLATURE</scope>
</reference>
<reference key="7">
    <citation type="journal article" date="2023" name="Plant Cell">
        <title>An updated nomenclature for plant ribosomal protein genes.</title>
        <authorList>
            <person name="Scarpin M.R."/>
            <person name="Busche M."/>
            <person name="Martinez R.E."/>
            <person name="Harper L.C."/>
            <person name="Reiser L."/>
            <person name="Szakonyi D."/>
            <person name="Merchante C."/>
            <person name="Lan T."/>
            <person name="Xiong W."/>
            <person name="Mo B."/>
            <person name="Tang G."/>
            <person name="Chen X."/>
            <person name="Bailey-Serres J."/>
            <person name="Browning K.S."/>
            <person name="Brunkard J.O."/>
        </authorList>
    </citation>
    <scope>NOMENCLATURE</scope>
</reference>